<sequence>GEPGGVGPIGPPGERGAPGNRXXXXXXXXXXXXXXXXXXXXXXXXXXXXXXXXXXXXXXXXXXXXXXXXXXXXXXXXXXXXXXXXXXXXXXXXXXXXXXXXXXXXXXXXXXXXXXXXXXXXXXXXXXXXXXXXXXXXXXXXXXXXXXXXXXXXXXXXXXXXXXXXXXXXXXXXXXXXXXXXXXXXXXXXXXXXXXXXXXXXXXXXXXXXXXXXXXXXXXXXXXXXXXXXXXXXXXXXXXXXXXXXXXXXXXXXXXXXXXXXXXXXXXXXXXXXXXXXXXXXXXXXXXXXXXXXXXXXXXXXXXXXXXXXXXXXXXXXXXXXXXXGAPGERGETGPPGPAGFAGPPGADGQPGAKXXXXXXXXXXXXXXXXXXXXXXXXXXXXXXXXXXXXXXXXXXXXXXXXXXXXXXXXVGPPGANGNPGPAGPPGPAGKXXXXXXXXXXXXXXXXXXXXXXXXXXXXXXXXXXXXXXXXXXXXXXXXXXXXXXXXXXXXXXXXXXXXXXXXXXXXXXXXXXXXXXXXXXXXXXXXXXXXXXXXXXXXXXXXXXXXXXXXXXXXXXXXXXXXXXXXXXXXXXXXXXXXXXXXXXXXXXXXXXXXXXXXXXXXXXXXXXXXXXXXXXXXXXXXXXXXXXXXXXXXXXXXGFTGLQGLPGPPGTSGDQGASGPSGPAGPR</sequence>
<feature type="chain" id="PRO_0000291374" description="Collagen alpha-1(II) chain">
    <location>
        <begin position="1" status="less than"/>
        <end position="669" status="greater than"/>
    </location>
</feature>
<feature type="region of interest" description="Disordered" evidence="4">
    <location>
        <begin position="318"/>
        <end position="360"/>
    </location>
</feature>
<feature type="region of interest" description="Disordered" evidence="4">
    <location>
        <begin position="405"/>
        <end position="438"/>
    </location>
</feature>
<feature type="region of interest" description="Disordered" evidence="4">
    <location>
        <begin position="638"/>
        <end position="669"/>
    </location>
</feature>
<feature type="compositionally biased region" description="Low complexity" evidence="4">
    <location>
        <begin position="318"/>
        <end position="327"/>
    </location>
</feature>
<feature type="compositionally biased region" description="Low complexity" evidence="4">
    <location>
        <begin position="339"/>
        <end position="360"/>
    </location>
</feature>
<feature type="compositionally biased region" description="Low complexity" evidence="4">
    <location>
        <begin position="405"/>
        <end position="420"/>
    </location>
</feature>
<feature type="compositionally biased region" description="Low complexity" evidence="4">
    <location>
        <begin position="429"/>
        <end position="438"/>
    </location>
</feature>
<feature type="compositionally biased region" description="Low complexity" evidence="4">
    <location>
        <begin position="638"/>
        <end position="647"/>
    </location>
</feature>
<feature type="modified residue" description="4-hydroxyproline" evidence="5">
    <location>
        <position position="3"/>
    </location>
</feature>
<feature type="modified residue" description="4-hydroxyproline" evidence="5">
    <location>
        <position position="12"/>
    </location>
</feature>
<feature type="modified residue" description="4-hydroxyproline" evidence="5">
    <location>
        <position position="336"/>
    </location>
</feature>
<feature type="modified residue" description="4-hydroxyproline" evidence="5">
    <location>
        <position position="345"/>
    </location>
</feature>
<feature type="modified residue" description="3-hydroxyproline" evidence="2">
    <location>
        <position position="413"/>
    </location>
</feature>
<feature type="modified residue" description="4-hydroxyproline" evidence="5">
    <location>
        <position position="414"/>
    </location>
</feature>
<feature type="modified residue" description="4-hydroxyproline" evidence="5">
    <location>
        <position position="420"/>
    </location>
</feature>
<feature type="modified residue" description="4-hydroxyproline" evidence="5">
    <location>
        <position position="426"/>
    </location>
</feature>
<feature type="modified residue" description="4-hydroxyproline" evidence="5">
    <location>
        <position position="648"/>
    </location>
</feature>
<feature type="modified residue" description="3-hydroxyproline" evidence="2">
    <location>
        <position position="650"/>
    </location>
</feature>
<feature type="unsure residue" description="A or S">
    <location>
        <position position="339"/>
    </location>
</feature>
<feature type="unsure residue" description="A or S">
    <location>
        <position position="342"/>
    </location>
</feature>
<feature type="unsure residue" description="S or A">
    <location>
        <position position="654"/>
    </location>
</feature>
<feature type="non-terminal residue">
    <location>
        <position position="1"/>
    </location>
</feature>
<feature type="non-terminal residue">
    <location>
        <position position="669"/>
    </location>
</feature>
<keyword id="KW-0176">Collagen</keyword>
<keyword id="KW-0903">Direct protein sequencing</keyword>
<keyword id="KW-0952">Extinct organism protein</keyword>
<keyword id="KW-0272">Extracellular matrix</keyword>
<keyword id="KW-0379">Hydroxylation</keyword>
<keyword id="KW-0677">Repeat</keyword>
<keyword id="KW-0964">Secreted</keyword>
<evidence type="ECO:0000250" key="1"/>
<evidence type="ECO:0000250" key="2">
    <source>
        <dbReference type="UniProtKB" id="P05539"/>
    </source>
</evidence>
<evidence type="ECO:0000255" key="3"/>
<evidence type="ECO:0000256" key="4">
    <source>
        <dbReference type="SAM" id="MobiDB-lite"/>
    </source>
</evidence>
<evidence type="ECO:0000269" key="5">
    <source ref="1"/>
</evidence>
<evidence type="ECO:0000305" key="6"/>
<comment type="function">
    <text evidence="6">Type II collagen is specific for cartilaginous tissues. It is essential for the normal embryonic development of the skeleton, for linear growth and for the ability of cartilage to resist compressive forces.</text>
</comment>
<comment type="subunit">
    <text evidence="6">Homotrimers of alpha 1(II) chains.</text>
</comment>
<comment type="subcellular location">
    <subcellularLocation>
        <location evidence="1">Secreted</location>
        <location evidence="1">Extracellular space</location>
        <location evidence="1">Extracellular matrix</location>
    </subcellularLocation>
</comment>
<comment type="PTM">
    <text evidence="5">Contains mostly 4-hydroxyproline. Prolines at the third position of the tripeptide repeating unit (G-X-P) are 4-hydroxylated in some or all of the chains.</text>
</comment>
<comment type="PTM">
    <text evidence="2">Contains 3-hydroxyproline at a few sites. This modification occurs on the first proline residue in the sequence motif Gly-Pro-Hyp, where Hyp is 4-hydroxyproline.</text>
</comment>
<comment type="miscellaneous">
    <text>These protein fragments were extracted from 160,000 to 600,000 year old bones. The tryptic peptides required multiple purification steps in order to eliminate contaminants and to increase the concentration of peptidic material.</text>
</comment>
<comment type="similarity">
    <text evidence="3">Belongs to the fibrillar collagen family.</text>
</comment>
<name>CO2A1_MAMAE</name>
<reference key="1">
    <citation type="submission" date="2007-09" db="UniProtKB">
        <authorList>
            <person name="Asara J.M."/>
        </authorList>
    </citation>
    <scope>PROTEIN SEQUENCE</scope>
    <scope>IDENTIFICATION BY MASS SPECTROMETRY</scope>
    <scope>HYDROXYLATION AT PRO-3; PRO-12; PRO-336; PRO-345; PRO-414; PRO-420; PRO-426 AND PRO-648</scope>
    <source>
        <tissue>Bone</tissue>
    </source>
</reference>
<protein>
    <recommendedName>
        <fullName>Collagen alpha-1(II) chain</fullName>
    </recommendedName>
    <alternativeName>
        <fullName>Alpha-1 type II collagen</fullName>
    </alternativeName>
</protein>
<proteinExistence type="evidence at protein level"/>
<dbReference type="GO" id="GO:0005581">
    <property type="term" value="C:collagen trimer"/>
    <property type="evidence" value="ECO:0007669"/>
    <property type="project" value="UniProtKB-KW"/>
</dbReference>
<dbReference type="GO" id="GO:0005576">
    <property type="term" value="C:extracellular region"/>
    <property type="evidence" value="ECO:0007669"/>
    <property type="project" value="UniProtKB-KW"/>
</dbReference>
<dbReference type="PANTHER" id="PTHR24637">
    <property type="entry name" value="COLLAGEN"/>
    <property type="match status" value="1"/>
</dbReference>
<dbReference type="PANTHER" id="PTHR24637:SF421">
    <property type="entry name" value="CUTICLE COLLAGEN DPY-2"/>
    <property type="match status" value="1"/>
</dbReference>
<accession>P85153</accession>
<organism>
    <name type="scientific">Mammut americanum</name>
    <name type="common">American mastodon</name>
    <dbReference type="NCBI Taxonomy" id="39053"/>
    <lineage>
        <taxon>Eukaryota</taxon>
        <taxon>Metazoa</taxon>
        <taxon>Chordata</taxon>
        <taxon>Craniata</taxon>
        <taxon>Vertebrata</taxon>
        <taxon>Euteleostomi</taxon>
        <taxon>Mammalia</taxon>
        <taxon>Eutheria</taxon>
        <taxon>Afrotheria</taxon>
        <taxon>Proboscidea</taxon>
        <taxon>Elephantidae</taxon>
        <taxon>Mammut</taxon>
    </lineage>
</organism>